<gene>
    <name evidence="1" type="primary">pyrB</name>
    <name type="ordered locus">PSPTO_5040</name>
</gene>
<evidence type="ECO:0000255" key="1">
    <source>
        <dbReference type="HAMAP-Rule" id="MF_00001"/>
    </source>
</evidence>
<dbReference type="EC" id="2.1.3.2" evidence="1"/>
<dbReference type="EMBL" id="AE016853">
    <property type="protein sequence ID" value="AAO58468.1"/>
    <property type="molecule type" value="Genomic_DNA"/>
</dbReference>
<dbReference type="RefSeq" id="NP_794773.1">
    <property type="nucleotide sequence ID" value="NC_004578.1"/>
</dbReference>
<dbReference type="RefSeq" id="WP_005736952.1">
    <property type="nucleotide sequence ID" value="NC_004578.1"/>
</dbReference>
<dbReference type="SMR" id="Q87V99"/>
<dbReference type="STRING" id="223283.PSPTO_5040"/>
<dbReference type="KEGG" id="pst:PSPTO_5040"/>
<dbReference type="PATRIC" id="fig|223283.9.peg.5159"/>
<dbReference type="eggNOG" id="COG0540">
    <property type="taxonomic scope" value="Bacteria"/>
</dbReference>
<dbReference type="HOGENOM" id="CLU_043846_2_0_6"/>
<dbReference type="OrthoDB" id="9774690at2"/>
<dbReference type="PhylomeDB" id="Q87V99"/>
<dbReference type="UniPathway" id="UPA00070">
    <property type="reaction ID" value="UER00116"/>
</dbReference>
<dbReference type="Proteomes" id="UP000002515">
    <property type="component" value="Chromosome"/>
</dbReference>
<dbReference type="GO" id="GO:0005829">
    <property type="term" value="C:cytosol"/>
    <property type="evidence" value="ECO:0007669"/>
    <property type="project" value="TreeGrafter"/>
</dbReference>
<dbReference type="GO" id="GO:0016597">
    <property type="term" value="F:amino acid binding"/>
    <property type="evidence" value="ECO:0007669"/>
    <property type="project" value="InterPro"/>
</dbReference>
<dbReference type="GO" id="GO:0004070">
    <property type="term" value="F:aspartate carbamoyltransferase activity"/>
    <property type="evidence" value="ECO:0007669"/>
    <property type="project" value="UniProtKB-UniRule"/>
</dbReference>
<dbReference type="GO" id="GO:0006207">
    <property type="term" value="P:'de novo' pyrimidine nucleobase biosynthetic process"/>
    <property type="evidence" value="ECO:0007669"/>
    <property type="project" value="InterPro"/>
</dbReference>
<dbReference type="GO" id="GO:0044205">
    <property type="term" value="P:'de novo' UMP biosynthetic process"/>
    <property type="evidence" value="ECO:0007669"/>
    <property type="project" value="UniProtKB-UniRule"/>
</dbReference>
<dbReference type="GO" id="GO:0006520">
    <property type="term" value="P:amino acid metabolic process"/>
    <property type="evidence" value="ECO:0007669"/>
    <property type="project" value="InterPro"/>
</dbReference>
<dbReference type="FunFam" id="3.40.50.1370:FF:000006">
    <property type="entry name" value="Aspartate carbamoyltransferase"/>
    <property type="match status" value="1"/>
</dbReference>
<dbReference type="Gene3D" id="3.40.50.1370">
    <property type="entry name" value="Aspartate/ornithine carbamoyltransferase"/>
    <property type="match status" value="2"/>
</dbReference>
<dbReference type="HAMAP" id="MF_00001">
    <property type="entry name" value="Asp_carb_tr"/>
    <property type="match status" value="1"/>
</dbReference>
<dbReference type="InterPro" id="IPR006132">
    <property type="entry name" value="Asp/Orn_carbamoyltranf_P-bd"/>
</dbReference>
<dbReference type="InterPro" id="IPR006130">
    <property type="entry name" value="Asp/Orn_carbamoylTrfase"/>
</dbReference>
<dbReference type="InterPro" id="IPR036901">
    <property type="entry name" value="Asp/Orn_carbamoylTrfase_sf"/>
</dbReference>
<dbReference type="InterPro" id="IPR002082">
    <property type="entry name" value="Asp_carbamoyltransf"/>
</dbReference>
<dbReference type="InterPro" id="IPR006131">
    <property type="entry name" value="Asp_carbamoyltransf_Asp/Orn-bd"/>
</dbReference>
<dbReference type="NCBIfam" id="TIGR00670">
    <property type="entry name" value="asp_carb_tr"/>
    <property type="match status" value="1"/>
</dbReference>
<dbReference type="NCBIfam" id="NF002032">
    <property type="entry name" value="PRK00856.1"/>
    <property type="match status" value="1"/>
</dbReference>
<dbReference type="PANTHER" id="PTHR45753:SF6">
    <property type="entry name" value="ASPARTATE CARBAMOYLTRANSFERASE"/>
    <property type="match status" value="1"/>
</dbReference>
<dbReference type="PANTHER" id="PTHR45753">
    <property type="entry name" value="ORNITHINE CARBAMOYLTRANSFERASE, MITOCHONDRIAL"/>
    <property type="match status" value="1"/>
</dbReference>
<dbReference type="Pfam" id="PF00185">
    <property type="entry name" value="OTCace"/>
    <property type="match status" value="1"/>
</dbReference>
<dbReference type="Pfam" id="PF02729">
    <property type="entry name" value="OTCace_N"/>
    <property type="match status" value="1"/>
</dbReference>
<dbReference type="PRINTS" id="PR00100">
    <property type="entry name" value="AOTCASE"/>
</dbReference>
<dbReference type="PRINTS" id="PR00101">
    <property type="entry name" value="ATCASE"/>
</dbReference>
<dbReference type="SUPFAM" id="SSF53671">
    <property type="entry name" value="Aspartate/ornithine carbamoyltransferase"/>
    <property type="match status" value="1"/>
</dbReference>
<dbReference type="PROSITE" id="PS00097">
    <property type="entry name" value="CARBAMOYLTRANSFERASE"/>
    <property type="match status" value="1"/>
</dbReference>
<organism>
    <name type="scientific">Pseudomonas syringae pv. tomato (strain ATCC BAA-871 / DC3000)</name>
    <dbReference type="NCBI Taxonomy" id="223283"/>
    <lineage>
        <taxon>Bacteria</taxon>
        <taxon>Pseudomonadati</taxon>
        <taxon>Pseudomonadota</taxon>
        <taxon>Gammaproteobacteria</taxon>
        <taxon>Pseudomonadales</taxon>
        <taxon>Pseudomonadaceae</taxon>
        <taxon>Pseudomonas</taxon>
    </lineage>
</organism>
<accession>Q87V99</accession>
<reference key="1">
    <citation type="journal article" date="2003" name="Proc. Natl. Acad. Sci. U.S.A.">
        <title>The complete genome sequence of the Arabidopsis and tomato pathogen Pseudomonas syringae pv. tomato DC3000.</title>
        <authorList>
            <person name="Buell C.R."/>
            <person name="Joardar V."/>
            <person name="Lindeberg M."/>
            <person name="Selengut J."/>
            <person name="Paulsen I.T."/>
            <person name="Gwinn M.L."/>
            <person name="Dodson R.J."/>
            <person name="DeBoy R.T."/>
            <person name="Durkin A.S."/>
            <person name="Kolonay J.F."/>
            <person name="Madupu R."/>
            <person name="Daugherty S.C."/>
            <person name="Brinkac L.M."/>
            <person name="Beanan M.J."/>
            <person name="Haft D.H."/>
            <person name="Nelson W.C."/>
            <person name="Davidsen T.M."/>
            <person name="Zafar N."/>
            <person name="Zhou L."/>
            <person name="Liu J."/>
            <person name="Yuan Q."/>
            <person name="Khouri H.M."/>
            <person name="Fedorova N.B."/>
            <person name="Tran B."/>
            <person name="Russell D."/>
            <person name="Berry K.J."/>
            <person name="Utterback T.R."/>
            <person name="Van Aken S.E."/>
            <person name="Feldblyum T.V."/>
            <person name="D'Ascenzo M."/>
            <person name="Deng W.-L."/>
            <person name="Ramos A.R."/>
            <person name="Alfano J.R."/>
            <person name="Cartinhour S."/>
            <person name="Chatterjee A.K."/>
            <person name="Delaney T.P."/>
            <person name="Lazarowitz S.G."/>
            <person name="Martin G.B."/>
            <person name="Schneider D.J."/>
            <person name="Tang X."/>
            <person name="Bender C.L."/>
            <person name="White O."/>
            <person name="Fraser C.M."/>
            <person name="Collmer A."/>
        </authorList>
    </citation>
    <scope>NUCLEOTIDE SEQUENCE [LARGE SCALE GENOMIC DNA]</scope>
    <source>
        <strain>ATCC BAA-871 / DC3000</strain>
    </source>
</reference>
<keyword id="KW-0665">Pyrimidine biosynthesis</keyword>
<keyword id="KW-1185">Reference proteome</keyword>
<keyword id="KW-0808">Transferase</keyword>
<comment type="function">
    <text evidence="1">Catalyzes the condensation of carbamoyl phosphate and aspartate to form carbamoyl aspartate and inorganic phosphate, the committed step in the de novo pyrimidine nucleotide biosynthesis pathway.</text>
</comment>
<comment type="catalytic activity">
    <reaction evidence="1">
        <text>carbamoyl phosphate + L-aspartate = N-carbamoyl-L-aspartate + phosphate + H(+)</text>
        <dbReference type="Rhea" id="RHEA:20013"/>
        <dbReference type="ChEBI" id="CHEBI:15378"/>
        <dbReference type="ChEBI" id="CHEBI:29991"/>
        <dbReference type="ChEBI" id="CHEBI:32814"/>
        <dbReference type="ChEBI" id="CHEBI:43474"/>
        <dbReference type="ChEBI" id="CHEBI:58228"/>
        <dbReference type="EC" id="2.1.3.2"/>
    </reaction>
</comment>
<comment type="pathway">
    <text evidence="1">Pyrimidine metabolism; UMP biosynthesis via de novo pathway; (S)-dihydroorotate from bicarbonate: step 2/3.</text>
</comment>
<comment type="subunit">
    <text evidence="1">Heterododecamer (2C3:3R2) of six catalytic PyrB chains organized as two trimers (C3), and six regulatory PyrI chains organized as three dimers (R2).</text>
</comment>
<comment type="similarity">
    <text evidence="1">Belongs to the aspartate/ornithine carbamoyltransferase superfamily. ATCase family.</text>
</comment>
<proteinExistence type="inferred from homology"/>
<protein>
    <recommendedName>
        <fullName evidence="1">Aspartate carbamoyltransferase catalytic subunit</fullName>
        <ecNumber evidence="1">2.1.3.2</ecNumber>
    </recommendedName>
    <alternativeName>
        <fullName evidence="1">Aspartate transcarbamylase</fullName>
        <shortName evidence="1">ATCase</shortName>
    </alternativeName>
</protein>
<sequence>MTPLDAKRPLQLNHQGQLRHFLSLDGLPRELLTEILDTADSFLEVGARAVKKVPLLRGKTVCNVFFENSTRTRTTFELAAQRLSADVITLNVSTSSTSKGETLFDTLRNLEAMAADMFVVRHADSGAAHFIAEHVCPDVAIINGGDGRHAHPTQGMLDMLTIRRHKGGFENLSVAIVGDILHSRVARSNMIALKALGCPDIRVIGPKTLLPVGVEQYGVKVYTDLNEGLKDVDVVIMLRLQRERMTGGLLPSEGEFYRLFGLTTARLAGAKPDAIVMHPGPINRGVEIESAVADGAHSVILNQVTYGIAIRMAVLSMAMSGQNAQRQFEQENAQ</sequence>
<feature type="chain" id="PRO_0000113180" description="Aspartate carbamoyltransferase catalytic subunit">
    <location>
        <begin position="1"/>
        <end position="334"/>
    </location>
</feature>
<feature type="binding site" evidence="1">
    <location>
        <position position="71"/>
    </location>
    <ligand>
        <name>carbamoyl phosphate</name>
        <dbReference type="ChEBI" id="CHEBI:58228"/>
    </ligand>
</feature>
<feature type="binding site" evidence="1">
    <location>
        <position position="72"/>
    </location>
    <ligand>
        <name>carbamoyl phosphate</name>
        <dbReference type="ChEBI" id="CHEBI:58228"/>
    </ligand>
</feature>
<feature type="binding site" evidence="1">
    <location>
        <position position="99"/>
    </location>
    <ligand>
        <name>L-aspartate</name>
        <dbReference type="ChEBI" id="CHEBI:29991"/>
    </ligand>
</feature>
<feature type="binding site" evidence="1">
    <location>
        <position position="121"/>
    </location>
    <ligand>
        <name>carbamoyl phosphate</name>
        <dbReference type="ChEBI" id="CHEBI:58228"/>
    </ligand>
</feature>
<feature type="binding site" evidence="1">
    <location>
        <position position="151"/>
    </location>
    <ligand>
        <name>carbamoyl phosphate</name>
        <dbReference type="ChEBI" id="CHEBI:58228"/>
    </ligand>
</feature>
<feature type="binding site" evidence="1">
    <location>
        <position position="154"/>
    </location>
    <ligand>
        <name>carbamoyl phosphate</name>
        <dbReference type="ChEBI" id="CHEBI:58228"/>
    </ligand>
</feature>
<feature type="binding site" evidence="1">
    <location>
        <position position="184"/>
    </location>
    <ligand>
        <name>L-aspartate</name>
        <dbReference type="ChEBI" id="CHEBI:29991"/>
    </ligand>
</feature>
<feature type="binding site" evidence="1">
    <location>
        <position position="239"/>
    </location>
    <ligand>
        <name>L-aspartate</name>
        <dbReference type="ChEBI" id="CHEBI:29991"/>
    </ligand>
</feature>
<feature type="binding site" evidence="1">
    <location>
        <position position="280"/>
    </location>
    <ligand>
        <name>carbamoyl phosphate</name>
        <dbReference type="ChEBI" id="CHEBI:58228"/>
    </ligand>
</feature>
<feature type="binding site" evidence="1">
    <location>
        <position position="281"/>
    </location>
    <ligand>
        <name>carbamoyl phosphate</name>
        <dbReference type="ChEBI" id="CHEBI:58228"/>
    </ligand>
</feature>
<name>PYRB_PSESM</name>